<feature type="chain" id="PRO_0000354366" description="Small ribosomal subunit protein uS19c">
    <location>
        <begin position="1"/>
        <end position="92"/>
    </location>
</feature>
<protein>
    <recommendedName>
        <fullName evidence="1">Small ribosomal subunit protein uS19c</fullName>
    </recommendedName>
    <alternativeName>
        <fullName evidence="2">30S ribosomal protein S19, chloroplastic</fullName>
    </alternativeName>
</protein>
<comment type="function">
    <text evidence="1">Protein S19 forms a complex with S13 that binds strongly to the 16S ribosomal RNA.</text>
</comment>
<comment type="subcellular location">
    <subcellularLocation>
        <location>Plastid</location>
        <location>Chloroplast</location>
    </subcellularLocation>
</comment>
<comment type="similarity">
    <text evidence="1">Belongs to the universal ribosomal protein uS19 family.</text>
</comment>
<name>RR19_OEDCA</name>
<proteinExistence type="inferred from homology"/>
<sequence length="92" mass="10468">MVRSLKKGPFVANDLFKKIEKLNNKGKKKVLVTWSRSSTIVPVMIGHTIAVHNGREHIPVFITDKMVGHKLGEFSLTRTYRGHAKTDKKSKR</sequence>
<geneLocation type="chloroplast"/>
<reference key="1">
    <citation type="journal article" date="2008" name="BMC Genomics">
        <title>Chloroplast DNA sequence of the green alga Oedogonium cardiacum (Chlorophyceae): unique genome architecture, derived characters shared with the Chaetophorales and novel genes acquired through horizontal transfer.</title>
        <authorList>
            <person name="Brouard J.-S."/>
            <person name="Otis C."/>
            <person name="Lemieux C."/>
            <person name="Turmel M."/>
        </authorList>
    </citation>
    <scope>NUCLEOTIDE SEQUENCE [LARGE SCALE GENOMIC DNA]</scope>
    <source>
        <strain>SAG 575-1b / CCAP 575/1B / UTEX LB 40</strain>
    </source>
</reference>
<organism>
    <name type="scientific">Oedogonium cardiacum</name>
    <name type="common">Filamentous green alga</name>
    <dbReference type="NCBI Taxonomy" id="55995"/>
    <lineage>
        <taxon>Eukaryota</taxon>
        <taxon>Viridiplantae</taxon>
        <taxon>Chlorophyta</taxon>
        <taxon>core chlorophytes</taxon>
        <taxon>Chlorophyceae</taxon>
        <taxon>OCC clade</taxon>
        <taxon>Oedogoniales</taxon>
        <taxon>Oedogoniaceae</taxon>
        <taxon>Oedogonium</taxon>
    </lineage>
</organism>
<keyword id="KW-0150">Chloroplast</keyword>
<keyword id="KW-0934">Plastid</keyword>
<keyword id="KW-0687">Ribonucleoprotein</keyword>
<keyword id="KW-0689">Ribosomal protein</keyword>
<keyword id="KW-0694">RNA-binding</keyword>
<keyword id="KW-0699">rRNA-binding</keyword>
<accession>B3V4Q2</accession>
<evidence type="ECO:0000255" key="1">
    <source>
        <dbReference type="HAMAP-Rule" id="MF_00531"/>
    </source>
</evidence>
<evidence type="ECO:0000305" key="2"/>
<dbReference type="EMBL" id="EU677193">
    <property type="protein sequence ID" value="ACC97255.1"/>
    <property type="molecule type" value="Genomic_DNA"/>
</dbReference>
<dbReference type="RefSeq" id="YP_002000406.1">
    <property type="nucleotide sequence ID" value="NC_011031.1"/>
</dbReference>
<dbReference type="SMR" id="B3V4Q2"/>
<dbReference type="GeneID" id="6440095"/>
<dbReference type="GO" id="GO:0009507">
    <property type="term" value="C:chloroplast"/>
    <property type="evidence" value="ECO:0007669"/>
    <property type="project" value="UniProtKB-SubCell"/>
</dbReference>
<dbReference type="GO" id="GO:0005763">
    <property type="term" value="C:mitochondrial small ribosomal subunit"/>
    <property type="evidence" value="ECO:0007669"/>
    <property type="project" value="TreeGrafter"/>
</dbReference>
<dbReference type="GO" id="GO:0019843">
    <property type="term" value="F:rRNA binding"/>
    <property type="evidence" value="ECO:0007669"/>
    <property type="project" value="UniProtKB-UniRule"/>
</dbReference>
<dbReference type="GO" id="GO:0003735">
    <property type="term" value="F:structural constituent of ribosome"/>
    <property type="evidence" value="ECO:0007669"/>
    <property type="project" value="InterPro"/>
</dbReference>
<dbReference type="GO" id="GO:0000028">
    <property type="term" value="P:ribosomal small subunit assembly"/>
    <property type="evidence" value="ECO:0007669"/>
    <property type="project" value="TreeGrafter"/>
</dbReference>
<dbReference type="GO" id="GO:0006412">
    <property type="term" value="P:translation"/>
    <property type="evidence" value="ECO:0007669"/>
    <property type="project" value="UniProtKB-UniRule"/>
</dbReference>
<dbReference type="FunFam" id="3.30.860.10:FF:000001">
    <property type="entry name" value="30S ribosomal protein S19"/>
    <property type="match status" value="1"/>
</dbReference>
<dbReference type="Gene3D" id="3.30.860.10">
    <property type="entry name" value="30s Ribosomal Protein S19, Chain A"/>
    <property type="match status" value="1"/>
</dbReference>
<dbReference type="HAMAP" id="MF_00531">
    <property type="entry name" value="Ribosomal_uS19"/>
    <property type="match status" value="1"/>
</dbReference>
<dbReference type="InterPro" id="IPR002222">
    <property type="entry name" value="Ribosomal_uS19"/>
</dbReference>
<dbReference type="InterPro" id="IPR005732">
    <property type="entry name" value="Ribosomal_uS19_bac-type"/>
</dbReference>
<dbReference type="InterPro" id="IPR020934">
    <property type="entry name" value="Ribosomal_uS19_CS"/>
</dbReference>
<dbReference type="InterPro" id="IPR023575">
    <property type="entry name" value="Ribosomal_uS19_SF"/>
</dbReference>
<dbReference type="NCBIfam" id="TIGR01050">
    <property type="entry name" value="rpsS_bact"/>
    <property type="match status" value="1"/>
</dbReference>
<dbReference type="PANTHER" id="PTHR11880">
    <property type="entry name" value="RIBOSOMAL PROTEIN S19P FAMILY MEMBER"/>
    <property type="match status" value="1"/>
</dbReference>
<dbReference type="PANTHER" id="PTHR11880:SF8">
    <property type="entry name" value="SMALL RIBOSOMAL SUBUNIT PROTEIN US19M"/>
    <property type="match status" value="1"/>
</dbReference>
<dbReference type="Pfam" id="PF00203">
    <property type="entry name" value="Ribosomal_S19"/>
    <property type="match status" value="1"/>
</dbReference>
<dbReference type="PIRSF" id="PIRSF002144">
    <property type="entry name" value="Ribosomal_S19"/>
    <property type="match status" value="1"/>
</dbReference>
<dbReference type="PRINTS" id="PR00975">
    <property type="entry name" value="RIBOSOMALS19"/>
</dbReference>
<dbReference type="SUPFAM" id="SSF54570">
    <property type="entry name" value="Ribosomal protein S19"/>
    <property type="match status" value="1"/>
</dbReference>
<dbReference type="PROSITE" id="PS00323">
    <property type="entry name" value="RIBOSOMAL_S19"/>
    <property type="match status" value="1"/>
</dbReference>
<gene>
    <name evidence="1" type="primary">rps19</name>
</gene>